<name>TEX30_HUMAN</name>
<feature type="chain" id="PRO_0000274312" description="Testis-expressed protein 30">
    <location>
        <begin position="1"/>
        <end position="227"/>
    </location>
</feature>
<feature type="splice variant" id="VSP_055706" description="In isoform 2." evidence="1">
    <original>GRSMGSRAAASVMC</original>
    <variation>ELVGESGTENASSP</variation>
    <location>
        <begin position="100"/>
        <end position="113"/>
    </location>
</feature>
<feature type="splice variant" id="VSP_055707" description="In isoform 2." evidence="1">
    <location>
        <begin position="114"/>
        <end position="227"/>
    </location>
</feature>
<proteinExistence type="evidence at protein level"/>
<evidence type="ECO:0000305" key="1"/>
<comment type="alternative products">
    <event type="alternative splicing"/>
    <isoform>
        <id>Q5JUR7-1</id>
        <name>1</name>
        <sequence type="displayed"/>
    </isoform>
    <isoform>
        <id>Q5JUR7-2</id>
        <name>2</name>
        <sequence type="described" ref="VSP_055706 VSP_055707"/>
    </isoform>
</comment>
<comment type="sequence caution" evidence="1">
    <conflict type="erroneous initiation">
        <sequence resource="EMBL-CDS" id="AAH15148"/>
    </conflict>
    <text>Truncated N-terminus.</text>
</comment>
<protein>
    <recommendedName>
        <fullName>Testis-expressed protein 30</fullName>
    </recommendedName>
</protein>
<organism>
    <name type="scientific">Homo sapiens</name>
    <name type="common">Human</name>
    <dbReference type="NCBI Taxonomy" id="9606"/>
    <lineage>
        <taxon>Eukaryota</taxon>
        <taxon>Metazoa</taxon>
        <taxon>Chordata</taxon>
        <taxon>Craniata</taxon>
        <taxon>Vertebrata</taxon>
        <taxon>Euteleostomi</taxon>
        <taxon>Mammalia</taxon>
        <taxon>Eutheria</taxon>
        <taxon>Euarchontoglires</taxon>
        <taxon>Primates</taxon>
        <taxon>Haplorrhini</taxon>
        <taxon>Catarrhini</taxon>
        <taxon>Hominidae</taxon>
        <taxon>Homo</taxon>
    </lineage>
</organism>
<gene>
    <name type="primary">TEX30</name>
    <name type="synonym">C13orf27</name>
</gene>
<reference key="1">
    <citation type="journal article" date="2004" name="Nature">
        <title>The DNA sequence and analysis of human chromosome 13.</title>
        <authorList>
            <person name="Dunham A."/>
            <person name="Matthews L.H."/>
            <person name="Burton J."/>
            <person name="Ashurst J.L."/>
            <person name="Howe K.L."/>
            <person name="Ashcroft K.J."/>
            <person name="Beare D.M."/>
            <person name="Burford D.C."/>
            <person name="Hunt S.E."/>
            <person name="Griffiths-Jones S."/>
            <person name="Jones M.C."/>
            <person name="Keenan S.J."/>
            <person name="Oliver K."/>
            <person name="Scott C.E."/>
            <person name="Ainscough R."/>
            <person name="Almeida J.P."/>
            <person name="Ambrose K.D."/>
            <person name="Andrews D.T."/>
            <person name="Ashwell R.I.S."/>
            <person name="Babbage A.K."/>
            <person name="Bagguley C.L."/>
            <person name="Bailey J."/>
            <person name="Bannerjee R."/>
            <person name="Barlow K.F."/>
            <person name="Bates K."/>
            <person name="Beasley H."/>
            <person name="Bird C.P."/>
            <person name="Bray-Allen S."/>
            <person name="Brown A.J."/>
            <person name="Brown J.Y."/>
            <person name="Burrill W."/>
            <person name="Carder C."/>
            <person name="Carter N.P."/>
            <person name="Chapman J.C."/>
            <person name="Clamp M.E."/>
            <person name="Clark S.Y."/>
            <person name="Clarke G."/>
            <person name="Clee C.M."/>
            <person name="Clegg S.C."/>
            <person name="Cobley V."/>
            <person name="Collins J.E."/>
            <person name="Corby N."/>
            <person name="Coville G.J."/>
            <person name="Deloukas P."/>
            <person name="Dhami P."/>
            <person name="Dunham I."/>
            <person name="Dunn M."/>
            <person name="Earthrowl M.E."/>
            <person name="Ellington A.G."/>
            <person name="Faulkner L."/>
            <person name="Frankish A.G."/>
            <person name="Frankland J."/>
            <person name="French L."/>
            <person name="Garner P."/>
            <person name="Garnett J."/>
            <person name="Gilbert J.G.R."/>
            <person name="Gilson C.J."/>
            <person name="Ghori J."/>
            <person name="Grafham D.V."/>
            <person name="Gribble S.M."/>
            <person name="Griffiths C."/>
            <person name="Hall R.E."/>
            <person name="Hammond S."/>
            <person name="Harley J.L."/>
            <person name="Hart E.A."/>
            <person name="Heath P.D."/>
            <person name="Howden P.J."/>
            <person name="Huckle E.J."/>
            <person name="Hunt P.J."/>
            <person name="Hunt A.R."/>
            <person name="Johnson C."/>
            <person name="Johnson D."/>
            <person name="Kay M."/>
            <person name="Kimberley A.M."/>
            <person name="King A."/>
            <person name="Laird G.K."/>
            <person name="Langford C.J."/>
            <person name="Lawlor S."/>
            <person name="Leongamornlert D.A."/>
            <person name="Lloyd D.M."/>
            <person name="Lloyd C."/>
            <person name="Loveland J.E."/>
            <person name="Lovell J."/>
            <person name="Martin S."/>
            <person name="Mashreghi-Mohammadi M."/>
            <person name="McLaren S.J."/>
            <person name="McMurray A."/>
            <person name="Milne S."/>
            <person name="Moore M.J.F."/>
            <person name="Nickerson T."/>
            <person name="Palmer S.A."/>
            <person name="Pearce A.V."/>
            <person name="Peck A.I."/>
            <person name="Pelan S."/>
            <person name="Phillimore B."/>
            <person name="Porter K.M."/>
            <person name="Rice C.M."/>
            <person name="Searle S."/>
            <person name="Sehra H.K."/>
            <person name="Shownkeen R."/>
            <person name="Skuce C.D."/>
            <person name="Smith M."/>
            <person name="Steward C.A."/>
            <person name="Sycamore N."/>
            <person name="Tester J."/>
            <person name="Thomas D.W."/>
            <person name="Tracey A."/>
            <person name="Tromans A."/>
            <person name="Tubby B."/>
            <person name="Wall M."/>
            <person name="Wallis J.M."/>
            <person name="West A.P."/>
            <person name="Whitehead S.L."/>
            <person name="Willey D.L."/>
            <person name="Wilming L."/>
            <person name="Wray P.W."/>
            <person name="Wright M.W."/>
            <person name="Young L."/>
            <person name="Coulson A."/>
            <person name="Durbin R.M."/>
            <person name="Hubbard T."/>
            <person name="Sulston J.E."/>
            <person name="Beck S."/>
            <person name="Bentley D.R."/>
            <person name="Rogers J."/>
            <person name="Ross M.T."/>
        </authorList>
    </citation>
    <scope>NUCLEOTIDE SEQUENCE [LARGE SCALE GENOMIC DNA]</scope>
</reference>
<reference key="2">
    <citation type="journal article" date="2004" name="Genome Res.">
        <title>The status, quality, and expansion of the NIH full-length cDNA project: the Mammalian Gene Collection (MGC).</title>
        <authorList>
            <consortium name="The MGC Project Team"/>
        </authorList>
    </citation>
    <scope>NUCLEOTIDE SEQUENCE [LARGE SCALE MRNA] (ISOFORM 1)</scope>
    <source>
        <tissue>Testis</tissue>
    </source>
</reference>
<accession>Q5JUR7</accession>
<accession>Q5JUR8</accession>
<accession>Q96KZ8</accession>
<sequence>MSHTEVKLKIPFGNKLLDAVCLVPNKSLTYGIILTHGASGDMNLPHLMSLASHLASHGFFCLRFTCKGLNIVHRIKAYKSVLNYLKTSGEYKLAGVFLGGRSMGSRAAASVMCHIEPDDGDDFVRGLICISYPLHHPKQQHKLRDEDLFRLKEPVLFVSGSADEMCEKNLLEKVAQKMQAPHKIHWIEKANHSMAVKGRSTNDVFKEINTQILFWIQEITEMDKKCH</sequence>
<keyword id="KW-0025">Alternative splicing</keyword>
<keyword id="KW-1267">Proteomics identification</keyword>
<keyword id="KW-1185">Reference proteome</keyword>
<dbReference type="EMBL" id="AL157769">
    <property type="status" value="NOT_ANNOTATED_CDS"/>
    <property type="molecule type" value="Genomic_DNA"/>
</dbReference>
<dbReference type="EMBL" id="BC015148">
    <property type="protein sequence ID" value="AAH15148.2"/>
    <property type="status" value="ALT_INIT"/>
    <property type="molecule type" value="mRNA"/>
</dbReference>
<dbReference type="CCDS" id="CCDS66578.1">
    <molecule id="Q5JUR7-2"/>
</dbReference>
<dbReference type="CCDS" id="CCDS9503.2">
    <molecule id="Q5JUR7-1"/>
</dbReference>
<dbReference type="RefSeq" id="NP_001273704.1">
    <molecule id="Q5JUR7-2"/>
    <property type="nucleotide sequence ID" value="NM_001286775.2"/>
</dbReference>
<dbReference type="RefSeq" id="NP_001273705.1">
    <property type="nucleotide sequence ID" value="NM_001286776.1"/>
</dbReference>
<dbReference type="RefSeq" id="NP_620134.3">
    <molecule id="Q5JUR7-1"/>
    <property type="nucleotide sequence ID" value="NM_138779.4"/>
</dbReference>
<dbReference type="RefSeq" id="XP_005254154.1">
    <molecule id="Q5JUR7-1"/>
    <property type="nucleotide sequence ID" value="XM_005254097.4"/>
</dbReference>
<dbReference type="RefSeq" id="XP_011519437.1">
    <property type="nucleotide sequence ID" value="XM_011521135.2"/>
</dbReference>
<dbReference type="RefSeq" id="XP_016876341.1">
    <molecule id="Q5JUR7-1"/>
    <property type="nucleotide sequence ID" value="XM_017020852.3"/>
</dbReference>
<dbReference type="RefSeq" id="XP_024305207.1">
    <molecule id="Q5JUR7-1"/>
    <property type="nucleotide sequence ID" value="XM_024449439.2"/>
</dbReference>
<dbReference type="RefSeq" id="XP_047286729.1">
    <molecule id="Q5JUR7-1"/>
    <property type="nucleotide sequence ID" value="XM_047430773.1"/>
</dbReference>
<dbReference type="RefSeq" id="XP_047286730.1">
    <molecule id="Q5JUR7-2"/>
    <property type="nucleotide sequence ID" value="XM_047430774.1"/>
</dbReference>
<dbReference type="RefSeq" id="XP_054231160.1">
    <molecule id="Q5JUR7-1"/>
    <property type="nucleotide sequence ID" value="XM_054375185.1"/>
</dbReference>
<dbReference type="RefSeq" id="XP_054231161.1">
    <molecule id="Q5JUR7-1"/>
    <property type="nucleotide sequence ID" value="XM_054375186.1"/>
</dbReference>
<dbReference type="RefSeq" id="XP_054231162.1">
    <molecule id="Q5JUR7-1"/>
    <property type="nucleotide sequence ID" value="XM_054375187.1"/>
</dbReference>
<dbReference type="RefSeq" id="XP_054231164.1">
    <molecule id="Q5JUR7-2"/>
    <property type="nucleotide sequence ID" value="XM_054375189.1"/>
</dbReference>
<dbReference type="SMR" id="Q5JUR7"/>
<dbReference type="BioGRID" id="124998">
    <property type="interactions" value="3"/>
</dbReference>
<dbReference type="FunCoup" id="Q5JUR7">
    <property type="interactions" value="403"/>
</dbReference>
<dbReference type="IntAct" id="Q5JUR7">
    <property type="interactions" value="2"/>
</dbReference>
<dbReference type="STRING" id="9606.ENSP00000365200"/>
<dbReference type="ChEMBL" id="CHEMBL2189125"/>
<dbReference type="ESTHER" id="human-TEX30">
    <property type="family name" value="NLS3-Tex30"/>
</dbReference>
<dbReference type="GlyGen" id="Q5JUR7">
    <property type="glycosylation" value="2 sites, 1 N-linked glycan (1 site), 1 O-linked glycan (1 site)"/>
</dbReference>
<dbReference type="iPTMnet" id="Q5JUR7"/>
<dbReference type="PhosphoSitePlus" id="Q5JUR7"/>
<dbReference type="BioMuta" id="TEX30"/>
<dbReference type="DMDM" id="74742331"/>
<dbReference type="jPOST" id="Q5JUR7"/>
<dbReference type="MassIVE" id="Q5JUR7"/>
<dbReference type="PaxDb" id="9606-ENSP00000365200"/>
<dbReference type="PeptideAtlas" id="Q5JUR7"/>
<dbReference type="ProteomicsDB" id="63288">
    <molecule id="Q5JUR7-1"/>
</dbReference>
<dbReference type="ProteomicsDB" id="63289"/>
<dbReference type="Pumba" id="Q5JUR7"/>
<dbReference type="Antibodypedia" id="25333">
    <property type="antibodies" value="24 antibodies from 9 providers"/>
</dbReference>
<dbReference type="DNASU" id="93081"/>
<dbReference type="Ensembl" id="ENST00000376027.5">
    <molecule id="Q5JUR7-2"/>
    <property type="protein sequence ID" value="ENSP00000365195.1"/>
    <property type="gene ID" value="ENSG00000151287.17"/>
</dbReference>
<dbReference type="Ensembl" id="ENST00000376029.3">
    <molecule id="Q5JUR7-2"/>
    <property type="protein sequence ID" value="ENSP00000365197.3"/>
    <property type="gene ID" value="ENSG00000151287.17"/>
</dbReference>
<dbReference type="Ensembl" id="ENST00000376032.9">
    <molecule id="Q5JUR7-1"/>
    <property type="protein sequence ID" value="ENSP00000365200.4"/>
    <property type="gene ID" value="ENSG00000151287.17"/>
</dbReference>
<dbReference type="GeneID" id="93081"/>
<dbReference type="KEGG" id="hsa:93081"/>
<dbReference type="MANE-Select" id="ENST00000376032.9">
    <property type="protein sequence ID" value="ENSP00000365200.4"/>
    <property type="RefSeq nucleotide sequence ID" value="NM_138779.5"/>
    <property type="RefSeq protein sequence ID" value="NP_620134.3"/>
</dbReference>
<dbReference type="UCSC" id="uc001vpn.5">
    <molecule id="Q5JUR7-1"/>
    <property type="organism name" value="human"/>
</dbReference>
<dbReference type="AGR" id="HGNC:25188"/>
<dbReference type="CTD" id="93081"/>
<dbReference type="GeneCards" id="TEX30"/>
<dbReference type="HGNC" id="HGNC:25188">
    <property type="gene designation" value="TEX30"/>
</dbReference>
<dbReference type="HPA" id="ENSG00000151287">
    <property type="expression patterns" value="Group enriched (epididymis, liver, testis)"/>
</dbReference>
<dbReference type="neXtProt" id="NX_Q5JUR7"/>
<dbReference type="OpenTargets" id="ENSG00000151287"/>
<dbReference type="PharmGKB" id="PA147358470"/>
<dbReference type="VEuPathDB" id="HostDB:ENSG00000151287"/>
<dbReference type="eggNOG" id="KOG3253">
    <property type="taxonomic scope" value="Eukaryota"/>
</dbReference>
<dbReference type="GeneTree" id="ENSGT00940000162655"/>
<dbReference type="HOGENOM" id="CLU_2269957_0_0_1"/>
<dbReference type="InParanoid" id="Q5JUR7"/>
<dbReference type="OMA" id="EVFWLQG"/>
<dbReference type="OrthoDB" id="6415022at2759"/>
<dbReference type="PAN-GO" id="Q5JUR7">
    <property type="GO annotations" value="0 GO annotations based on evolutionary models"/>
</dbReference>
<dbReference type="PhylomeDB" id="Q5JUR7"/>
<dbReference type="TreeFam" id="TF332335"/>
<dbReference type="PathwayCommons" id="Q5JUR7"/>
<dbReference type="BioGRID-ORCS" id="93081">
    <property type="hits" value="13 hits in 1160 CRISPR screens"/>
</dbReference>
<dbReference type="GenomeRNAi" id="93081"/>
<dbReference type="Pharos" id="Q5JUR7">
    <property type="development level" value="Tdark"/>
</dbReference>
<dbReference type="PRO" id="PR:Q5JUR7"/>
<dbReference type="Proteomes" id="UP000005640">
    <property type="component" value="Chromosome 13"/>
</dbReference>
<dbReference type="RNAct" id="Q5JUR7">
    <property type="molecule type" value="protein"/>
</dbReference>
<dbReference type="Bgee" id="ENSG00000151287">
    <property type="expression patterns" value="Expressed in right testis and 168 other cell types or tissues"/>
</dbReference>
<dbReference type="ExpressionAtlas" id="Q5JUR7">
    <property type="expression patterns" value="baseline and differential"/>
</dbReference>
<dbReference type="Gene3D" id="3.40.50.1820">
    <property type="entry name" value="alpha/beta hydrolase"/>
    <property type="match status" value="1"/>
</dbReference>
<dbReference type="InterPro" id="IPR029058">
    <property type="entry name" value="AB_hydrolase_fold"/>
</dbReference>
<dbReference type="InterPro" id="IPR046879">
    <property type="entry name" value="KANL3/Tex30_Abhydrolase"/>
</dbReference>
<dbReference type="InterPro" id="IPR026555">
    <property type="entry name" value="NSL3/Tex30"/>
</dbReference>
<dbReference type="PANTHER" id="PTHR13136">
    <property type="entry name" value="TESTIS DEVELOPMENT PROTEIN PRTD"/>
    <property type="match status" value="1"/>
</dbReference>
<dbReference type="PANTHER" id="PTHR13136:SF11">
    <property type="entry name" value="TESTIS-EXPRESSED PROTEIN 30"/>
    <property type="match status" value="1"/>
</dbReference>
<dbReference type="Pfam" id="PF20408">
    <property type="entry name" value="Abhydrolase_11"/>
    <property type="match status" value="1"/>
</dbReference>
<dbReference type="SUPFAM" id="SSF53474">
    <property type="entry name" value="alpha/beta-Hydrolases"/>
    <property type="match status" value="1"/>
</dbReference>